<evidence type="ECO:0000250" key="1"/>
<evidence type="ECO:0000255" key="2">
    <source>
        <dbReference type="PROSITE-ProRule" id="PRU00805"/>
    </source>
</evidence>
<evidence type="ECO:0000269" key="3">
    <source ref="2"/>
</evidence>
<evidence type="ECO:0000305" key="4"/>
<gene>
    <name type="primary">ACO</name>
</gene>
<protein>
    <recommendedName>
        <fullName>1-aminocyclopropane-1-carboxylate oxidase</fullName>
        <shortName>ACC oxidase</shortName>
        <ecNumber>1.14.17.4</ecNumber>
    </recommendedName>
    <alternativeName>
        <fullName>Ethylene-forming enzyme</fullName>
        <shortName>EFE</shortName>
    </alternativeName>
</protein>
<reference key="1">
    <citation type="submission" date="1994-10" db="EMBL/GenBank/DDBJ databases">
        <title>Sequence of a cDNA clone encoding tobacco ethylene-forming enzyme.</title>
        <authorList>
            <person name="Knoester M."/>
            <person name="Bol J.F."/>
            <person name="Van Loon L.C."/>
            <person name="Linthorst H.J.M."/>
        </authorList>
    </citation>
    <scope>NUCLEOTIDE SEQUENCE [MRNA]</scope>
    <source>
        <strain>cv. Samsun NN</strain>
        <tissue>Leaf</tissue>
    </source>
</reference>
<reference key="2">
    <citation type="journal article" date="1999" name="Plant Cell Physiol.">
        <title>Ethylene promotes the necrotic lesion formation and basic PR gene expression in TMV-infected tobacco.</title>
        <authorList>
            <person name="Ohtsubo N."/>
            <person name="Mitsuhara I."/>
            <person name="Koga M."/>
            <person name="Seo S."/>
            <person name="Ohashi Y."/>
        </authorList>
    </citation>
    <scope>NUCLEOTIDE SEQUENCE [MRNA]</scope>
    <scope>INDUCTION</scope>
    <source>
        <strain>cv. Samsun NN</strain>
        <tissue>Leaf</tissue>
    </source>
</reference>
<feature type="chain" id="PRO_0000386525" description="1-aminocyclopropane-1-carboxylate oxidase">
    <location>
        <begin position="1"/>
        <end position="319"/>
    </location>
</feature>
<feature type="domain" description="Fe2OG dioxygenase" evidence="2">
    <location>
        <begin position="152"/>
        <end position="253"/>
    </location>
</feature>
<feature type="binding site" evidence="2">
    <location>
        <position position="177"/>
    </location>
    <ligand>
        <name>Fe cation</name>
        <dbReference type="ChEBI" id="CHEBI:24875"/>
    </ligand>
</feature>
<feature type="binding site" evidence="2">
    <location>
        <position position="179"/>
    </location>
    <ligand>
        <name>Fe cation</name>
        <dbReference type="ChEBI" id="CHEBI:24875"/>
    </ligand>
</feature>
<feature type="binding site" evidence="2">
    <location>
        <position position="234"/>
    </location>
    <ligand>
        <name>Fe cation</name>
        <dbReference type="ChEBI" id="CHEBI:24875"/>
    </ligand>
</feature>
<feature type="sequence conflict" description="In Ref. 2; BAA83466." evidence="4" ref="2">
    <original>K</original>
    <variation>Q</variation>
    <location>
        <position position="119"/>
    </location>
</feature>
<feature type="sequence conflict" description="In Ref. 2; BAA83466." evidence="4" ref="2">
    <original>K</original>
    <variation>Q</variation>
    <location>
        <position position="151"/>
    </location>
</feature>
<feature type="sequence conflict" description="In Ref. 2; BAA83466." evidence="4" ref="2">
    <original>S</original>
    <variation>A</variation>
    <location>
        <position position="157"/>
    </location>
</feature>
<feature type="sequence conflict" description="In Ref. 2; BAA83466." evidence="4" ref="2">
    <original>K</original>
    <variation>Q</variation>
    <location>
        <position position="167"/>
    </location>
</feature>
<feature type="sequence conflict" description="In Ref. 2; BAA83466." evidence="4" ref="2">
    <original>T</original>
    <variation>S</variation>
    <location>
        <position position="193"/>
    </location>
</feature>
<feature type="sequence conflict" description="In Ref. 2; BAA83466." evidence="4" ref="2">
    <original>L</original>
    <variation>H</variation>
    <location>
        <position position="211"/>
    </location>
</feature>
<feature type="sequence conflict" description="In Ref. 2; BAA83466." evidence="4" ref="2">
    <original>Y</original>
    <variation>N</variation>
    <location>
        <position position="285"/>
    </location>
</feature>
<sequence>MENFPIINLEKLNGSERADTMEMIKDACENWGFFELVNHGIPHEVMDTVEKMTKGHYKKCMEQRFKELVASKGLEAVQAEVTDLDWESTFFLRHLPVSNICEVPDLDDQYREVMRDFAKRLEKLAEELLDLLCENLGLEKGYLKKIFYGTKGPNFGSKVSNYPPCPKPDLIKGLRAHTDAGGIILLFQDDKVTGLQLLKDGQWIDVPPMRLSIVVNLGDQLEVITNGKYKSVMHRVITQTDGTRMSLASFYNPGSDAVIFPAPTLVEKEAEESKAIYPKFVFDDYMKLYAGLKFQAKEPRFEAMIKAMETVKSDPVATA</sequence>
<proteinExistence type="evidence at transcript level"/>
<accession>Q43792</accession>
<accession>Q9SXL3</accession>
<keyword id="KW-0266">Ethylene biosynthesis</keyword>
<keyword id="KW-0408">Iron</keyword>
<keyword id="KW-0479">Metal-binding</keyword>
<keyword id="KW-0560">Oxidoreductase</keyword>
<keyword id="KW-0611">Plant defense</keyword>
<keyword id="KW-1185">Reference proteome</keyword>
<keyword id="KW-0847">Vitamin C</keyword>
<organism>
    <name type="scientific">Nicotiana tabacum</name>
    <name type="common">Common tobacco</name>
    <dbReference type="NCBI Taxonomy" id="4097"/>
    <lineage>
        <taxon>Eukaryota</taxon>
        <taxon>Viridiplantae</taxon>
        <taxon>Streptophyta</taxon>
        <taxon>Embryophyta</taxon>
        <taxon>Tracheophyta</taxon>
        <taxon>Spermatophyta</taxon>
        <taxon>Magnoliopsida</taxon>
        <taxon>eudicotyledons</taxon>
        <taxon>Gunneridae</taxon>
        <taxon>Pentapetalae</taxon>
        <taxon>asterids</taxon>
        <taxon>lamiids</taxon>
        <taxon>Solanales</taxon>
        <taxon>Solanaceae</taxon>
        <taxon>Nicotianoideae</taxon>
        <taxon>Nicotianeae</taxon>
        <taxon>Nicotiana</taxon>
    </lineage>
</organism>
<comment type="catalytic activity">
    <reaction>
        <text>1-aminocyclopropane-1-carboxylate + L-ascorbate + O2 = ethene + L-dehydroascorbate + hydrogen cyanide + CO2 + 2 H2O</text>
        <dbReference type="Rhea" id="RHEA:23640"/>
        <dbReference type="ChEBI" id="CHEBI:15377"/>
        <dbReference type="ChEBI" id="CHEBI:15379"/>
        <dbReference type="ChEBI" id="CHEBI:16526"/>
        <dbReference type="ChEBI" id="CHEBI:18153"/>
        <dbReference type="ChEBI" id="CHEBI:18407"/>
        <dbReference type="ChEBI" id="CHEBI:38290"/>
        <dbReference type="ChEBI" id="CHEBI:58360"/>
        <dbReference type="ChEBI" id="CHEBI:58539"/>
        <dbReference type="EC" id="1.14.17.4"/>
    </reaction>
</comment>
<comment type="cofactor">
    <cofactor evidence="1">
        <name>Fe cation</name>
        <dbReference type="ChEBI" id="CHEBI:24875"/>
    </cofactor>
</comment>
<comment type="pathway">
    <text>Alkene biosynthesis; ethylene biosynthesis via S-adenosyl-L-methionine; ethylene from S-adenosyl-L-methionine: step 2/2.</text>
</comment>
<comment type="induction">
    <text evidence="3">Up-regulated during the early stage of hypersensitive response.</text>
</comment>
<comment type="similarity">
    <text evidence="4">Belongs to the iron/ascorbate-dependent oxidoreductase family.</text>
</comment>
<name>ACCO_TOBAC</name>
<dbReference type="EC" id="1.14.17.4"/>
<dbReference type="EMBL" id="Z46349">
    <property type="protein sequence ID" value="CAA86468.1"/>
    <property type="molecule type" value="mRNA"/>
</dbReference>
<dbReference type="EMBL" id="AB012857">
    <property type="protein sequence ID" value="BAA83466.1"/>
    <property type="molecule type" value="mRNA"/>
</dbReference>
<dbReference type="PIR" id="S48811">
    <property type="entry name" value="S48811"/>
</dbReference>
<dbReference type="RefSeq" id="NP_001312238.1">
    <property type="nucleotide sequence ID" value="NM_001325309.1"/>
</dbReference>
<dbReference type="SMR" id="Q43792"/>
<dbReference type="STRING" id="4097.Q43792"/>
<dbReference type="PaxDb" id="4097-Q43792"/>
<dbReference type="GeneID" id="107781126"/>
<dbReference type="KEGG" id="nta:107781126"/>
<dbReference type="OrthoDB" id="288590at2759"/>
<dbReference type="UniPathway" id="UPA00384">
    <property type="reaction ID" value="UER00563"/>
</dbReference>
<dbReference type="Proteomes" id="UP000084051">
    <property type="component" value="Unplaced"/>
</dbReference>
<dbReference type="GO" id="GO:0009815">
    <property type="term" value="F:1-aminocyclopropane-1-carboxylate oxidase activity"/>
    <property type="evidence" value="ECO:0007669"/>
    <property type="project" value="UniProtKB-EC"/>
</dbReference>
<dbReference type="GO" id="GO:0016706">
    <property type="term" value="F:2-oxoglutarate-dependent dioxygenase activity"/>
    <property type="evidence" value="ECO:0000318"/>
    <property type="project" value="GO_Central"/>
</dbReference>
<dbReference type="GO" id="GO:0031418">
    <property type="term" value="F:L-ascorbic acid binding"/>
    <property type="evidence" value="ECO:0007669"/>
    <property type="project" value="UniProtKB-KW"/>
</dbReference>
<dbReference type="GO" id="GO:0046872">
    <property type="term" value="F:metal ion binding"/>
    <property type="evidence" value="ECO:0007669"/>
    <property type="project" value="UniProtKB-KW"/>
</dbReference>
<dbReference type="GO" id="GO:0009805">
    <property type="term" value="P:coumarin biosynthetic process"/>
    <property type="evidence" value="ECO:0007669"/>
    <property type="project" value="UniProtKB-ARBA"/>
</dbReference>
<dbReference type="GO" id="GO:0006952">
    <property type="term" value="P:defense response"/>
    <property type="evidence" value="ECO:0007669"/>
    <property type="project" value="UniProtKB-KW"/>
</dbReference>
<dbReference type="GO" id="GO:0009693">
    <property type="term" value="P:ethylene biosynthetic process"/>
    <property type="evidence" value="ECO:0007669"/>
    <property type="project" value="UniProtKB-UniPathway"/>
</dbReference>
<dbReference type="GO" id="GO:0002238">
    <property type="term" value="P:response to molecule of fungal origin"/>
    <property type="evidence" value="ECO:0007669"/>
    <property type="project" value="UniProtKB-ARBA"/>
</dbReference>
<dbReference type="FunFam" id="2.60.120.330:FF:000002">
    <property type="entry name" value="1-aminocyclopropane-1-carboxylate oxidase 1"/>
    <property type="match status" value="1"/>
</dbReference>
<dbReference type="Gene3D" id="2.60.120.330">
    <property type="entry name" value="B-lactam Antibiotic, Isopenicillin N Synthase, Chain"/>
    <property type="match status" value="1"/>
</dbReference>
<dbReference type="InterPro" id="IPR026992">
    <property type="entry name" value="DIOX_N"/>
</dbReference>
<dbReference type="InterPro" id="IPR044861">
    <property type="entry name" value="IPNS-like_FE2OG_OXY"/>
</dbReference>
<dbReference type="InterPro" id="IPR027443">
    <property type="entry name" value="IPNS-like_sf"/>
</dbReference>
<dbReference type="InterPro" id="IPR005123">
    <property type="entry name" value="Oxoglu/Fe-dep_dioxygenase_dom"/>
</dbReference>
<dbReference type="InterPro" id="IPR050295">
    <property type="entry name" value="Plant_2OG-oxidoreductases"/>
</dbReference>
<dbReference type="PANTHER" id="PTHR47991">
    <property type="entry name" value="OXOGLUTARATE/IRON-DEPENDENT DIOXYGENASE"/>
    <property type="match status" value="1"/>
</dbReference>
<dbReference type="Pfam" id="PF03171">
    <property type="entry name" value="2OG-FeII_Oxy"/>
    <property type="match status" value="1"/>
</dbReference>
<dbReference type="Pfam" id="PF14226">
    <property type="entry name" value="DIOX_N"/>
    <property type="match status" value="1"/>
</dbReference>
<dbReference type="SUPFAM" id="SSF51197">
    <property type="entry name" value="Clavaminate synthase-like"/>
    <property type="match status" value="1"/>
</dbReference>
<dbReference type="PROSITE" id="PS51471">
    <property type="entry name" value="FE2OG_OXY"/>
    <property type="match status" value="1"/>
</dbReference>